<sequence length="222" mass="24887">MESVLNNEKAIVVFSGGQDSTTCLFYAKKHFKEVELVTFNYGQRHDTEIEVAKQIAQDQGMKHHVLDMSLLSQLTPNALTQHDMEITNNEDGIPNTFVPARNLLFLSFAGALAYQIGAKHIITGVCETDFSGYPDCRDSFIKSMNVTLSLAMDKDFVIHTPLMWLNKAETWKLSDELEVLDYIRTKTLTCYNGIIGDGCGECPACHLRQRGLNQYLESKGAL</sequence>
<evidence type="ECO:0000255" key="1">
    <source>
        <dbReference type="HAMAP-Rule" id="MF_01633"/>
    </source>
</evidence>
<gene>
    <name evidence="1" type="primary">queC</name>
    <name type="ordered locus">NWMN_0681</name>
</gene>
<accession>A6QF21</accession>
<organism>
    <name type="scientific">Staphylococcus aureus (strain Newman)</name>
    <dbReference type="NCBI Taxonomy" id="426430"/>
    <lineage>
        <taxon>Bacteria</taxon>
        <taxon>Bacillati</taxon>
        <taxon>Bacillota</taxon>
        <taxon>Bacilli</taxon>
        <taxon>Bacillales</taxon>
        <taxon>Staphylococcaceae</taxon>
        <taxon>Staphylococcus</taxon>
    </lineage>
</organism>
<keyword id="KW-0067">ATP-binding</keyword>
<keyword id="KW-0436">Ligase</keyword>
<keyword id="KW-0479">Metal-binding</keyword>
<keyword id="KW-0547">Nucleotide-binding</keyword>
<keyword id="KW-0671">Queuosine biosynthesis</keyword>
<keyword id="KW-0862">Zinc</keyword>
<name>QUEC_STAAE</name>
<protein>
    <recommendedName>
        <fullName evidence="1">7-cyano-7-deazaguanine synthase</fullName>
        <ecNumber evidence="1">6.3.4.20</ecNumber>
    </recommendedName>
    <alternativeName>
        <fullName evidence="1">7-cyano-7-carbaguanine synthase</fullName>
    </alternativeName>
    <alternativeName>
        <fullName evidence="1">PreQ(0) synthase</fullName>
    </alternativeName>
    <alternativeName>
        <fullName evidence="1">Queuosine biosynthesis protein QueC</fullName>
    </alternativeName>
</protein>
<reference key="1">
    <citation type="journal article" date="2008" name="J. Bacteriol.">
        <title>Genome sequence of Staphylococcus aureus strain Newman and comparative analysis of staphylococcal genomes: polymorphism and evolution of two major pathogenicity islands.</title>
        <authorList>
            <person name="Baba T."/>
            <person name="Bae T."/>
            <person name="Schneewind O."/>
            <person name="Takeuchi F."/>
            <person name="Hiramatsu K."/>
        </authorList>
    </citation>
    <scope>NUCLEOTIDE SEQUENCE [LARGE SCALE GENOMIC DNA]</scope>
    <source>
        <strain>Newman</strain>
    </source>
</reference>
<proteinExistence type="inferred from homology"/>
<dbReference type="EC" id="6.3.4.20" evidence="1"/>
<dbReference type="EMBL" id="AP009351">
    <property type="protein sequence ID" value="BAF66953.1"/>
    <property type="molecule type" value="Genomic_DNA"/>
</dbReference>
<dbReference type="RefSeq" id="WP_000446724.1">
    <property type="nucleotide sequence ID" value="NZ_JBBIAE010000002.1"/>
</dbReference>
<dbReference type="SMR" id="A6QF21"/>
<dbReference type="KEGG" id="sae:NWMN_0681"/>
<dbReference type="HOGENOM" id="CLU_081854_0_0_9"/>
<dbReference type="UniPathway" id="UPA00391"/>
<dbReference type="Proteomes" id="UP000006386">
    <property type="component" value="Chromosome"/>
</dbReference>
<dbReference type="GO" id="GO:0005524">
    <property type="term" value="F:ATP binding"/>
    <property type="evidence" value="ECO:0007669"/>
    <property type="project" value="UniProtKB-UniRule"/>
</dbReference>
<dbReference type="GO" id="GO:0016879">
    <property type="term" value="F:ligase activity, forming carbon-nitrogen bonds"/>
    <property type="evidence" value="ECO:0007669"/>
    <property type="project" value="UniProtKB-UniRule"/>
</dbReference>
<dbReference type="GO" id="GO:0008270">
    <property type="term" value="F:zinc ion binding"/>
    <property type="evidence" value="ECO:0007669"/>
    <property type="project" value="UniProtKB-UniRule"/>
</dbReference>
<dbReference type="GO" id="GO:0008616">
    <property type="term" value="P:queuosine biosynthetic process"/>
    <property type="evidence" value="ECO:0007669"/>
    <property type="project" value="UniProtKB-UniRule"/>
</dbReference>
<dbReference type="CDD" id="cd01995">
    <property type="entry name" value="QueC-like"/>
    <property type="match status" value="1"/>
</dbReference>
<dbReference type="FunFam" id="3.40.50.620:FF:000017">
    <property type="entry name" value="7-cyano-7-deazaguanine synthase"/>
    <property type="match status" value="1"/>
</dbReference>
<dbReference type="Gene3D" id="3.40.50.620">
    <property type="entry name" value="HUPs"/>
    <property type="match status" value="1"/>
</dbReference>
<dbReference type="HAMAP" id="MF_01633">
    <property type="entry name" value="QueC"/>
    <property type="match status" value="1"/>
</dbReference>
<dbReference type="InterPro" id="IPR018317">
    <property type="entry name" value="QueC"/>
</dbReference>
<dbReference type="InterPro" id="IPR014729">
    <property type="entry name" value="Rossmann-like_a/b/a_fold"/>
</dbReference>
<dbReference type="NCBIfam" id="TIGR00364">
    <property type="entry name" value="7-cyano-7-deazaguanine synthase QueC"/>
    <property type="match status" value="1"/>
</dbReference>
<dbReference type="PANTHER" id="PTHR42914">
    <property type="entry name" value="7-CYANO-7-DEAZAGUANINE SYNTHASE"/>
    <property type="match status" value="1"/>
</dbReference>
<dbReference type="PANTHER" id="PTHR42914:SF1">
    <property type="entry name" value="7-CYANO-7-DEAZAGUANINE SYNTHASE"/>
    <property type="match status" value="1"/>
</dbReference>
<dbReference type="Pfam" id="PF06508">
    <property type="entry name" value="QueC"/>
    <property type="match status" value="1"/>
</dbReference>
<dbReference type="PIRSF" id="PIRSF006293">
    <property type="entry name" value="ExsB"/>
    <property type="match status" value="1"/>
</dbReference>
<dbReference type="SUPFAM" id="SSF52402">
    <property type="entry name" value="Adenine nucleotide alpha hydrolases-like"/>
    <property type="match status" value="1"/>
</dbReference>
<comment type="function">
    <text evidence="1">Catalyzes the ATP-dependent conversion of 7-carboxy-7-deazaguanine (CDG) to 7-cyano-7-deazaguanine (preQ(0)).</text>
</comment>
<comment type="catalytic activity">
    <reaction evidence="1">
        <text>7-carboxy-7-deazaguanine + NH4(+) + ATP = 7-cyano-7-deazaguanine + ADP + phosphate + H2O + H(+)</text>
        <dbReference type="Rhea" id="RHEA:27982"/>
        <dbReference type="ChEBI" id="CHEBI:15377"/>
        <dbReference type="ChEBI" id="CHEBI:15378"/>
        <dbReference type="ChEBI" id="CHEBI:28938"/>
        <dbReference type="ChEBI" id="CHEBI:30616"/>
        <dbReference type="ChEBI" id="CHEBI:43474"/>
        <dbReference type="ChEBI" id="CHEBI:45075"/>
        <dbReference type="ChEBI" id="CHEBI:61036"/>
        <dbReference type="ChEBI" id="CHEBI:456216"/>
        <dbReference type="EC" id="6.3.4.20"/>
    </reaction>
</comment>
<comment type="cofactor">
    <cofactor evidence="1">
        <name>Zn(2+)</name>
        <dbReference type="ChEBI" id="CHEBI:29105"/>
    </cofactor>
    <text evidence="1">Binds 1 zinc ion per subunit.</text>
</comment>
<comment type="pathway">
    <text evidence="1">Purine metabolism; 7-cyano-7-deazaguanine biosynthesis.</text>
</comment>
<comment type="subunit">
    <text evidence="1">Homodimer.</text>
</comment>
<comment type="similarity">
    <text evidence="1">Belongs to the QueC family.</text>
</comment>
<feature type="chain" id="PRO_0000336956" description="7-cyano-7-deazaguanine synthase">
    <location>
        <begin position="1"/>
        <end position="222"/>
    </location>
</feature>
<feature type="binding site" evidence="1">
    <location>
        <begin position="14"/>
        <end position="24"/>
    </location>
    <ligand>
        <name>ATP</name>
        <dbReference type="ChEBI" id="CHEBI:30616"/>
    </ligand>
</feature>
<feature type="binding site" evidence="1">
    <location>
        <position position="190"/>
    </location>
    <ligand>
        <name>Zn(2+)</name>
        <dbReference type="ChEBI" id="CHEBI:29105"/>
    </ligand>
</feature>
<feature type="binding site" evidence="1">
    <location>
        <position position="199"/>
    </location>
    <ligand>
        <name>Zn(2+)</name>
        <dbReference type="ChEBI" id="CHEBI:29105"/>
    </ligand>
</feature>
<feature type="binding site" evidence="1">
    <location>
        <position position="202"/>
    </location>
    <ligand>
        <name>Zn(2+)</name>
        <dbReference type="ChEBI" id="CHEBI:29105"/>
    </ligand>
</feature>
<feature type="binding site" evidence="1">
    <location>
        <position position="205"/>
    </location>
    <ligand>
        <name>Zn(2+)</name>
        <dbReference type="ChEBI" id="CHEBI:29105"/>
    </ligand>
</feature>